<protein>
    <recommendedName>
        <fullName evidence="13">Cytochrome P450 71D181</fullName>
    </recommendedName>
    <alternativeName>
        <fullName evidence="15">Alpha-terpinene hydroxylase</fullName>
    </alternativeName>
    <alternativeName>
        <fullName evidence="15">Carvacrol synthase</fullName>
        <ecNumber evidence="4">1.14.14.-</ecNumber>
    </alternativeName>
    <alternativeName>
        <fullName evidence="15">Carveol synthase</fullName>
        <ecNumber evidence="4">1.14.14.51</ecNumber>
        <ecNumber evidence="4">1.14.14.53</ecNumber>
    </alternativeName>
    <alternativeName>
        <fullName evidence="15">Gamma-terpinene hydroxylase</fullName>
    </alternativeName>
    <alternativeName>
        <fullName evidence="15">Limonene hydroxylase</fullName>
    </alternativeName>
</protein>
<gene>
    <name evidence="13" type="primary">CYP71D181</name>
</gene>
<proteinExistence type="evidence at protein level"/>
<organism>
    <name type="scientific">Thymus vulgaris</name>
    <name type="common">Thyme</name>
    <dbReference type="NCBI Taxonomy" id="49992"/>
    <lineage>
        <taxon>Eukaryota</taxon>
        <taxon>Viridiplantae</taxon>
        <taxon>Streptophyta</taxon>
        <taxon>Embryophyta</taxon>
        <taxon>Tracheophyta</taxon>
        <taxon>Spermatophyta</taxon>
        <taxon>Magnoliopsida</taxon>
        <taxon>eudicotyledons</taxon>
        <taxon>Gunneridae</taxon>
        <taxon>Pentapetalae</taxon>
        <taxon>asterids</taxon>
        <taxon>lamiids</taxon>
        <taxon>Lamiales</taxon>
        <taxon>Lamiaceae</taxon>
        <taxon>Nepetoideae</taxon>
        <taxon>Mentheae</taxon>
        <taxon>Thymus</taxon>
    </lineage>
</organism>
<reference key="1">
    <citation type="thesis" date="2011" institute="Friedrich Schiller University of Jena" country="Germany">
        <title>Biosynthesis of the phenolic monoterpenes, thymol and carvacrol, by terpene synthases and cytochrome P450s in oregano and thyme.</title>
        <authorList>
            <person name="Crocoll C."/>
        </authorList>
    </citation>
    <scope>NUCLEOTIDE SEQUENCE [MRNA]</scope>
    <scope>FUNCTION</scope>
    <scope>CATALYTIC ACTIVITY</scope>
    <scope>PATHWAY</scope>
    <scope>BIOPHYSICOCHEMICAL PROPERTIES</scope>
    <source>
        <strain>cv. Tc</strain>
        <tissue>Leaf</tissue>
    </source>
</reference>
<reference key="2">
    <citation type="journal article" date="2015" name="Crit. Rev. Food Sci. Nutr.">
        <title>The bioactivity and toxicological actions of carvacrol.</title>
        <authorList>
            <person name="Suntres Z.E."/>
            <person name="Coccimiglio J."/>
            <person name="Alipour M."/>
        </authorList>
    </citation>
    <scope>REVIEW ON CARVACROL</scope>
    <scope>BIOTECHNOLOGY</scope>
</reference>
<reference key="3">
    <citation type="journal article" date="2018" name="Phytother. Res.">
        <title>Thymol, thyme, and other plant sources: Health and potential uses.</title>
        <authorList>
            <person name="Salehi B."/>
            <person name="Mishra A.P."/>
            <person name="Shukla I."/>
            <person name="Sharifi-Rad M."/>
            <person name="Contreras M.D.M."/>
            <person name="Segura-Carretero A."/>
            <person name="Fathi H."/>
            <person name="Nasrabadi N.N."/>
            <person name="Kobarfard F."/>
            <person name="Sharifi-Rad J."/>
        </authorList>
    </citation>
    <scope>REVIEW ON THYMOL</scope>
    <scope>BIOTECHNOLOGY</scope>
</reference>
<reference key="4">
    <citation type="journal article" date="2019" name="Nat. Prod. Res.">
        <title>Synthesis and antifungal activity of carvacrol and thymol esters with heteroaromatic carboxylic acids.</title>
        <authorList>
            <person name="Wang K."/>
            <person name="Jiang S."/>
            <person name="Yang Y."/>
            <person name="Fan L."/>
            <person name="Su F."/>
            <person name="Ye M."/>
        </authorList>
    </citation>
    <scope>REVIEW ON CARVACROL AND THYMOL</scope>
    <scope>BIOTECHNOLOGY</scope>
</reference>
<reference key="5">
    <citation type="journal article" date="2020" name="Front. Plant Sci.">
        <title>Carvacrol, a plant metabolite targeting viral protease (Mpro) and ACE2 in host cells can be a possible candidate for COVID-19.</title>
        <authorList>
            <person name="Javed H."/>
            <person name="Meeran M.F.N."/>
            <person name="Jha N.K."/>
            <person name="Ojha S."/>
        </authorList>
    </citation>
    <scope>REVIEW ON CARVACROL EFFECTS ON COVID-19</scope>
    <scope>BIOTECHNOLOGY</scope>
</reference>
<reference key="6">
    <citation type="journal article" date="2020" name="J. Biomol. Struct. Dyn.">
        <title>Identification of phytochemical inhibitors against main protease of COVID-19 using molecular modeling approaches.</title>
        <authorList>
            <person name="Kumar A."/>
            <person name="Choudhir G."/>
            <person name="Shukla S.K."/>
            <person name="Sharma M."/>
            <person name="Tyagi P."/>
            <person name="Bhushan A."/>
            <person name="Rathore M."/>
        </authorList>
    </citation>
    <scope>REVIEW ON CARVACROL EFFECTS ON COVID-19</scope>
    <scope>BIOTECHNOLOGY</scope>
</reference>
<reference key="7">
    <citation type="journal article" date="2020" name="J. Biomol. Struct. Dyn.">
        <title>Synthesis, anticholinesterase activity and molecular modeling studies of novel carvacrol-substituted amide derivatives.</title>
        <authorList>
            <person name="Zengin Kurt B."/>
            <person name="Durdagi S."/>
            <person name="Celebi G."/>
            <person name="Ekhteiari Salmas R."/>
            <person name="Sonmez F."/>
        </authorList>
    </citation>
    <scope>REVIEW ON CARVACROL DERIVATIVES</scope>
    <scope>BIOTECHNOLOGY</scope>
</reference>
<reference key="8">
    <citation type="journal article" date="2020" name="J. Mol. Struct.">
        <title>Computational evaluation of major components from plant essential oils as potent inhibitors of SARS-CoV-2 spike protein.</title>
        <authorList>
            <person name="Kulkarni S.A."/>
            <person name="Nagarajan S.K."/>
            <person name="Ramesh V."/>
            <person name="Palaniyandi V."/>
            <person name="Selvam S.P."/>
            <person name="Madhavan T."/>
        </authorList>
    </citation>
    <scope>REVIEW ON PLANT ESSENTIAL OILS EFFECTS ON COVID-19</scope>
    <scope>BIOTECHNOLOGY</scope>
</reference>
<reference key="9">
    <citation type="journal article" date="2021" name="Front. Chem.">
        <title>Antiviral essential oil components against SARS-CoV-2 in pre-procedural mouth rinses for dental settings during COVID-19: A computational study.</title>
        <authorList>
            <person name="Yadalam P.K."/>
            <person name="Varatharajan K."/>
            <person name="Rajapandian K."/>
            <person name="Chopra P."/>
            <person name="Arumuganainar D."/>
            <person name="Nagarathnam T."/>
            <person name="Sohn H."/>
            <person name="Madhavan T."/>
        </authorList>
    </citation>
    <scope>REVIEW ON PLANT ESSENTIAL OILS EFFECTS ON COVID-19</scope>
    <scope>BIOTECHNOLOGY</scope>
</reference>
<keyword id="KW-0349">Heme</keyword>
<keyword id="KW-0408">Iron</keyword>
<keyword id="KW-0472">Membrane</keyword>
<keyword id="KW-0479">Metal-binding</keyword>
<keyword id="KW-0503">Monooxygenase</keyword>
<keyword id="KW-0560">Oxidoreductase</keyword>
<keyword id="KW-0735">Signal-anchor</keyword>
<keyword id="KW-0812">Transmembrane</keyword>
<keyword id="KW-1133">Transmembrane helix</keyword>
<evidence type="ECO:0000250" key="1">
    <source>
        <dbReference type="UniProtKB" id="Q96242"/>
    </source>
</evidence>
<evidence type="ECO:0000255" key="2"/>
<evidence type="ECO:0000256" key="3">
    <source>
        <dbReference type="SAM" id="MobiDB-lite"/>
    </source>
</evidence>
<evidence type="ECO:0000269" key="4">
    <source ref="1"/>
</evidence>
<evidence type="ECO:0000303" key="5">
    <source>
    </source>
</evidence>
<evidence type="ECO:0000303" key="6">
    <source>
    </source>
</evidence>
<evidence type="ECO:0000303" key="7">
    <source>
    </source>
</evidence>
<evidence type="ECO:0000303" key="8">
    <source>
    </source>
</evidence>
<evidence type="ECO:0000303" key="9">
    <source>
    </source>
</evidence>
<evidence type="ECO:0000303" key="10">
    <source>
    </source>
</evidence>
<evidence type="ECO:0000303" key="11">
    <source>
    </source>
</evidence>
<evidence type="ECO:0000303" key="12">
    <source>
    </source>
</evidence>
<evidence type="ECO:0000303" key="13">
    <source ref="1"/>
</evidence>
<evidence type="ECO:0000305" key="14"/>
<evidence type="ECO:0000305" key="15">
    <source ref="1"/>
</evidence>
<name>CP181_THYVU</name>
<accession>P0DO42</accession>
<comment type="function">
    <text evidence="4">Involved in the biosynthesis of phenolic monoterpenes natural products thymol and carvacrol which have a broad range of biological activities acting as antimicrobial compounds, insecticides, antioxidants and pharmaceutical agents (Ref.1). Catalyzes the C2-hydroxylation of gamma-terpinene and alpha-terpinene to produce carvacrol (Ref.1). Also mediates the C6-hydroxylation of (4S)-limonene and (4R)-limonene to form carveol (Ref.1).</text>
</comment>
<comment type="catalytic activity">
    <reaction evidence="4">
        <text>gamma-terpinene + 2 reduced [NADPH--hemoprotein reductase] + 2 O2 = carvacrol + 2 oxidized [NADPH--hemoprotein reductase] + 3 H2O + 2 H(+)</text>
        <dbReference type="Rhea" id="RHEA:67404"/>
        <dbReference type="Rhea" id="RHEA-COMP:11964"/>
        <dbReference type="Rhea" id="RHEA-COMP:11965"/>
        <dbReference type="ChEBI" id="CHEBI:3440"/>
        <dbReference type="ChEBI" id="CHEBI:10577"/>
        <dbReference type="ChEBI" id="CHEBI:15377"/>
        <dbReference type="ChEBI" id="CHEBI:15378"/>
        <dbReference type="ChEBI" id="CHEBI:15379"/>
        <dbReference type="ChEBI" id="CHEBI:57618"/>
        <dbReference type="ChEBI" id="CHEBI:58210"/>
    </reaction>
    <physiologicalReaction direction="left-to-right" evidence="4">
        <dbReference type="Rhea" id="RHEA:67405"/>
    </physiologicalReaction>
</comment>
<comment type="catalytic activity">
    <reaction evidence="4">
        <text>(4S)-limonene + reduced [NADPH--hemoprotein reductase] + O2 = (1S,5R)-carveol + oxidized [NADPH--hemoprotein reductase] + H2O + H(+)</text>
        <dbReference type="Rhea" id="RHEA:17945"/>
        <dbReference type="Rhea" id="RHEA-COMP:11964"/>
        <dbReference type="Rhea" id="RHEA-COMP:11965"/>
        <dbReference type="ChEBI" id="CHEBI:15377"/>
        <dbReference type="ChEBI" id="CHEBI:15378"/>
        <dbReference type="ChEBI" id="CHEBI:15379"/>
        <dbReference type="ChEBI" id="CHEBI:15383"/>
        <dbReference type="ChEBI" id="CHEBI:15389"/>
        <dbReference type="ChEBI" id="CHEBI:57618"/>
        <dbReference type="ChEBI" id="CHEBI:58210"/>
        <dbReference type="EC" id="1.14.14.51"/>
    </reaction>
    <physiologicalReaction direction="left-to-right" evidence="4">
        <dbReference type="Rhea" id="RHEA:17946"/>
    </physiologicalReaction>
</comment>
<comment type="catalytic activity">
    <reaction evidence="4">
        <text>(4R)-limonene + reduced [NADPH--hemoprotein reductase] + O2 = (1R,5S)-carveol + oxidized [NADPH--hemoprotein reductase] + H2O + H(+)</text>
        <dbReference type="Rhea" id="RHEA:18957"/>
        <dbReference type="Rhea" id="RHEA-COMP:11964"/>
        <dbReference type="Rhea" id="RHEA-COMP:11965"/>
        <dbReference type="ChEBI" id="CHEBI:15377"/>
        <dbReference type="ChEBI" id="CHEBI:15378"/>
        <dbReference type="ChEBI" id="CHEBI:15379"/>
        <dbReference type="ChEBI" id="CHEBI:15382"/>
        <dbReference type="ChEBI" id="CHEBI:15388"/>
        <dbReference type="ChEBI" id="CHEBI:57618"/>
        <dbReference type="ChEBI" id="CHEBI:58210"/>
        <dbReference type="EC" id="1.14.14.53"/>
    </reaction>
    <physiologicalReaction direction="left-to-right" evidence="4">
        <dbReference type="Rhea" id="RHEA:18958"/>
    </physiologicalReaction>
</comment>
<comment type="catalytic activity">
    <reaction evidence="4">
        <text>alpha-terpinene + 2 reduced [NADPH--hemoprotein reductase] + 2 O2 = carvacrol + 2 oxidized [NADPH--hemoprotein reductase] + 3 H2O + 2 H(+)</text>
        <dbReference type="Rhea" id="RHEA:67412"/>
        <dbReference type="Rhea" id="RHEA-COMP:11964"/>
        <dbReference type="Rhea" id="RHEA-COMP:11965"/>
        <dbReference type="ChEBI" id="CHEBI:3440"/>
        <dbReference type="ChEBI" id="CHEBI:10334"/>
        <dbReference type="ChEBI" id="CHEBI:15377"/>
        <dbReference type="ChEBI" id="CHEBI:15378"/>
        <dbReference type="ChEBI" id="CHEBI:15379"/>
        <dbReference type="ChEBI" id="CHEBI:57618"/>
        <dbReference type="ChEBI" id="CHEBI:58210"/>
    </reaction>
    <physiologicalReaction direction="left-to-right" evidence="4">
        <dbReference type="Rhea" id="RHEA:67413"/>
    </physiologicalReaction>
</comment>
<comment type="cofactor">
    <cofactor evidence="1">
        <name>heme</name>
        <dbReference type="ChEBI" id="CHEBI:30413"/>
    </cofactor>
</comment>
<comment type="biophysicochemical properties">
    <phDependence>
        <text evidence="4">Optimum pH is 6.8-7.</text>
    </phDependence>
</comment>
<comment type="pathway">
    <text evidence="4">Secondary metabolite biosynthesis; terpenoid biosynthesis.</text>
</comment>
<comment type="subcellular location">
    <subcellularLocation>
        <location evidence="2">Membrane</location>
        <topology evidence="14">Single-pass type II membrane protein</topology>
    </subcellularLocation>
</comment>
<comment type="biotechnology">
    <text evidence="6 7 10 12">The monoterpenic phenol thymol is widely used as a fragrance and a flavoring ingredient in food and cosmetic industries (PubMed:29785774). Its derivatives have also several biological and pharmacological properties such as antimicrobial, antioxidant, anticarcinogenesis, anti-inflammatory and antispasmodic activities (PubMed:29785774, PubMed:29874939). Medical applications include the treatment of disorders affecting the respiratory, nervous, and cardiovascular systems (PubMed:29785774). It may also act as a growth enhancer and immunomodulator (PubMed:29785774). Thymol may also have antiviral activity toward COVID-19 by binding to the S1 receptor binding domain of the SARS-CoV-2 spike (S) glycoprotein (PubMed:32834111, PubMed:33855010).</text>
</comment>
<comment type="biotechnology">
    <text evidence="5 7 8 9 10 11 12">The monoterpenic phenol carvacrol is commonly used as a fragrance and a food flavoring ingredient and preservative (PubMed:24915411). Its derivatives exhibit also various biological and pharmacological properties including antioxidant, antibacterial, antifungal, insecticid, nematicid, anticancer, anti-inflammatory, hepatoprotective, spasmolytic, and vasorelaxant (PubMed:24915411, PubMed:29874939, PubMed:30836858, PubMed:33664752). Phytochemical inhibitor targeting the main SARS-CoV-2 viral protease (Mpro) and ACE2 in human host cells, carvacrol is a possible candidate for treating COVID-19 (PubMed:32448034, PubMed:33664752). Carvacrol may also have antiviral activity toward COVID-19 by binding to the S1 receptor binding domain of the SARS-CoV-2 spike (S) glycoprotein (PubMed:32834111, PubMed:33855010).</text>
</comment>
<comment type="similarity">
    <text evidence="14">Belongs to the cytochrome P450 family.</text>
</comment>
<dbReference type="EC" id="1.14.14.-" evidence="4"/>
<dbReference type="EC" id="1.14.14.51" evidence="4"/>
<dbReference type="EC" id="1.14.14.53" evidence="4"/>
<dbReference type="SMR" id="P0DO42"/>
<dbReference type="UniPathway" id="UPA00213"/>
<dbReference type="GO" id="GO:0016020">
    <property type="term" value="C:membrane"/>
    <property type="evidence" value="ECO:0007669"/>
    <property type="project" value="UniProtKB-SubCell"/>
</dbReference>
<dbReference type="GO" id="GO:0020037">
    <property type="term" value="F:heme binding"/>
    <property type="evidence" value="ECO:0007669"/>
    <property type="project" value="InterPro"/>
</dbReference>
<dbReference type="GO" id="GO:0005506">
    <property type="term" value="F:iron ion binding"/>
    <property type="evidence" value="ECO:0007669"/>
    <property type="project" value="InterPro"/>
</dbReference>
<dbReference type="GO" id="GO:0004497">
    <property type="term" value="F:monooxygenase activity"/>
    <property type="evidence" value="ECO:0007669"/>
    <property type="project" value="UniProtKB-KW"/>
</dbReference>
<dbReference type="GO" id="GO:0016705">
    <property type="term" value="F:oxidoreductase activity, acting on paired donors, with incorporation or reduction of molecular oxygen"/>
    <property type="evidence" value="ECO:0007669"/>
    <property type="project" value="InterPro"/>
</dbReference>
<dbReference type="GO" id="GO:0016114">
    <property type="term" value="P:terpenoid biosynthetic process"/>
    <property type="evidence" value="ECO:0007669"/>
    <property type="project" value="UniProtKB-UniPathway"/>
</dbReference>
<dbReference type="CDD" id="cd11072">
    <property type="entry name" value="CYP71-like"/>
    <property type="match status" value="1"/>
</dbReference>
<dbReference type="FunFam" id="1.10.630.10:FF:000043">
    <property type="entry name" value="Cytochrome P450 99A2"/>
    <property type="match status" value="1"/>
</dbReference>
<dbReference type="Gene3D" id="1.10.630.10">
    <property type="entry name" value="Cytochrome P450"/>
    <property type="match status" value="1"/>
</dbReference>
<dbReference type="InterPro" id="IPR052306">
    <property type="entry name" value="CYP450_71D"/>
</dbReference>
<dbReference type="InterPro" id="IPR001128">
    <property type="entry name" value="Cyt_P450"/>
</dbReference>
<dbReference type="InterPro" id="IPR017972">
    <property type="entry name" value="Cyt_P450_CS"/>
</dbReference>
<dbReference type="InterPro" id="IPR002401">
    <property type="entry name" value="Cyt_P450_E_grp-I"/>
</dbReference>
<dbReference type="InterPro" id="IPR036396">
    <property type="entry name" value="Cyt_P450_sf"/>
</dbReference>
<dbReference type="PANTHER" id="PTHR47953:SF19">
    <property type="entry name" value="OS06G0641600 PROTEIN"/>
    <property type="match status" value="1"/>
</dbReference>
<dbReference type="PANTHER" id="PTHR47953">
    <property type="entry name" value="OS08G0105600 PROTEIN"/>
    <property type="match status" value="1"/>
</dbReference>
<dbReference type="Pfam" id="PF00067">
    <property type="entry name" value="p450"/>
    <property type="match status" value="1"/>
</dbReference>
<dbReference type="PRINTS" id="PR00463">
    <property type="entry name" value="EP450I"/>
</dbReference>
<dbReference type="PRINTS" id="PR00385">
    <property type="entry name" value="P450"/>
</dbReference>
<dbReference type="SUPFAM" id="SSF48264">
    <property type="entry name" value="Cytochrome P450"/>
    <property type="match status" value="1"/>
</dbReference>
<dbReference type="PROSITE" id="PS00086">
    <property type="entry name" value="CYTOCHROME_P450"/>
    <property type="match status" value="1"/>
</dbReference>
<feature type="chain" id="PRO_0000453329" description="Cytochrome P450 71D181">
    <location>
        <begin position="1"/>
        <end position="496"/>
    </location>
</feature>
<feature type="transmembrane region" description="Helical; Signal-anchor for type II membrane protein" evidence="2">
    <location>
        <begin position="1"/>
        <end position="21"/>
    </location>
</feature>
<feature type="region of interest" description="Disordered" evidence="3">
    <location>
        <begin position="471"/>
        <end position="496"/>
    </location>
</feature>
<feature type="binding site" description="axial binding residue" evidence="1">
    <location>
        <position position="435"/>
    </location>
    <ligand>
        <name>heme</name>
        <dbReference type="ChEBI" id="CHEBI:30413"/>
    </ligand>
    <ligandPart>
        <name>Fe</name>
        <dbReference type="ChEBI" id="CHEBI:18248"/>
    </ligandPart>
</feature>
<sequence length="496" mass="56034">MDISILWVAIILVISSYFIFMNKWRAAKLPENLPPSPPKLPVIGHLHLLRGGLPQHVLRGITQKYGAVAHLQLGEVYSVVLSSAESTKQAMKVLDPTFADRFDSFGSQIMWYNNNDMIFSRYNDHWRQIRKICVSELLSPKNVRSFGFIRQDEMARLIRVFESSVGVPINASEEISKMSCAIVCRAAFGSVLKDQGLLADLVKEALGMASGFELADLYPSSWLLNLLCFNKYRLRRMRQRLDDILDGFLEEHRVKKSGEFGGEDIIDVLYRMQKDSENKVPITNSGIKGFIFDVFSAGTETSATTIQWALSELMKNPEKLAKAQAEVREKLKGKTNPDVAEVQEIKYPHSVVKETLRLHPPFPLIPRLCKEECEVTGYTIPAKTRILVNVWSIGRDPAYWKDPDTFNPDRFDEVSRDVIGNDFELIPFGAGRRICPGLHFGLANVEVPLAQLLYHFEWKLPQGMTPADMDMSETPGLSGPRKNPLIMVPTIHNPTS</sequence>